<dbReference type="EMBL" id="AAHF01000004">
    <property type="protein sequence ID" value="EAL90810.1"/>
    <property type="molecule type" value="Genomic_DNA"/>
</dbReference>
<dbReference type="RefSeq" id="XP_752848.1">
    <property type="nucleotide sequence ID" value="XM_747755.1"/>
</dbReference>
<dbReference type="SMR" id="Q4WRX2"/>
<dbReference type="FunCoup" id="Q4WRX2">
    <property type="interactions" value="46"/>
</dbReference>
<dbReference type="STRING" id="330879.Q4WRX2"/>
<dbReference type="EnsemblFungi" id="EAL90810">
    <property type="protein sequence ID" value="EAL90810"/>
    <property type="gene ID" value="AFUA_1G14790"/>
</dbReference>
<dbReference type="GeneID" id="3509871"/>
<dbReference type="KEGG" id="afm:AFUA_1G14790"/>
<dbReference type="VEuPathDB" id="FungiDB:Afu1g14790"/>
<dbReference type="eggNOG" id="ENOG502S3PB">
    <property type="taxonomic scope" value="Eukaryota"/>
</dbReference>
<dbReference type="HOGENOM" id="CLU_026794_0_0_1"/>
<dbReference type="InParanoid" id="Q4WRX2"/>
<dbReference type="OMA" id="KRAHFCF"/>
<dbReference type="OrthoDB" id="3356905at2759"/>
<dbReference type="Proteomes" id="UP000002530">
    <property type="component" value="Chromosome 1"/>
</dbReference>
<dbReference type="GO" id="GO:0005789">
    <property type="term" value="C:endoplasmic reticulum membrane"/>
    <property type="evidence" value="ECO:0007669"/>
    <property type="project" value="UniProtKB-SubCell"/>
</dbReference>
<dbReference type="GO" id="GO:0032865">
    <property type="term" value="C:ERMES complex"/>
    <property type="evidence" value="ECO:0000318"/>
    <property type="project" value="GO_Central"/>
</dbReference>
<dbReference type="GO" id="GO:0008289">
    <property type="term" value="F:lipid binding"/>
    <property type="evidence" value="ECO:0007669"/>
    <property type="project" value="UniProtKB-KW"/>
</dbReference>
<dbReference type="GO" id="GO:0000002">
    <property type="term" value="P:mitochondrial genome maintenance"/>
    <property type="evidence" value="ECO:0007669"/>
    <property type="project" value="UniProtKB-UniRule"/>
</dbReference>
<dbReference type="GO" id="GO:1990456">
    <property type="term" value="P:mitochondrion-endoplasmic reticulum membrane tethering"/>
    <property type="evidence" value="ECO:0000318"/>
    <property type="project" value="GO_Central"/>
</dbReference>
<dbReference type="GO" id="GO:0015914">
    <property type="term" value="P:phospholipid transport"/>
    <property type="evidence" value="ECO:0000318"/>
    <property type="project" value="GO_Central"/>
</dbReference>
<dbReference type="GO" id="GO:0045040">
    <property type="term" value="P:protein insertion into mitochondrial outer membrane"/>
    <property type="evidence" value="ECO:0007669"/>
    <property type="project" value="UniProtKB-UniRule"/>
</dbReference>
<dbReference type="CDD" id="cd21672">
    <property type="entry name" value="SMP_Mdm12"/>
    <property type="match status" value="1"/>
</dbReference>
<dbReference type="HAMAP" id="MF_03104">
    <property type="entry name" value="Mdm12"/>
    <property type="match status" value="1"/>
</dbReference>
<dbReference type="InterPro" id="IPR027532">
    <property type="entry name" value="Mdm12"/>
</dbReference>
<dbReference type="InterPro" id="IPR019411">
    <property type="entry name" value="MMM1_dom"/>
</dbReference>
<dbReference type="InterPro" id="IPR031468">
    <property type="entry name" value="SMP_LBD"/>
</dbReference>
<dbReference type="PANTHER" id="PTHR28204">
    <property type="entry name" value="MITOCHONDRIAL DISTRIBUTION AND MORPHOLOGY PROTEIN 12"/>
    <property type="match status" value="1"/>
</dbReference>
<dbReference type="PANTHER" id="PTHR28204:SF1">
    <property type="entry name" value="MITOCHONDRIAL DISTRIBUTION AND MORPHOLOGY PROTEIN 12"/>
    <property type="match status" value="1"/>
</dbReference>
<dbReference type="Pfam" id="PF10296">
    <property type="entry name" value="MMM1"/>
    <property type="match status" value="1"/>
</dbReference>
<dbReference type="PROSITE" id="PS51847">
    <property type="entry name" value="SMP"/>
    <property type="match status" value="1"/>
</dbReference>
<proteinExistence type="inferred from homology"/>
<protein>
    <recommendedName>
        <fullName evidence="1">Mitochondrial distribution and morphology protein 12</fullName>
    </recommendedName>
    <alternativeName>
        <fullName evidence="1">Mitochondrial inheritance component MDM12</fullName>
    </alternativeName>
</protein>
<sequence>MSIDVNWRFATSGPDGEALAERIRSFIHDRFQQVALPRFIRSVQVHAFDFGTIPPELEIKDFCEPFADFYEEDDDDHTSDASEERGEEHSSRWNSTHPELNEPSYREDTAVNHSLRDPFPDGFPTSPLRSPLGEHLNPHFLPRASTPGIPGGTSTLGYHLMSLGGLSGTQTPLAAVAGGNPFASGWSDSGMGPGNRGRSETHAGMQHPRAEPEIDTSNSTSRPSTANTLPSHPSGSSKNSGQAATGRNDHPSLHAGEHLEDSVTQGQLPLPPRMRERRPEDFQVLCHVKYAGDVRLSLTAEILLDYPMPSFVGLPLKLNVTGITFDGVAVIAYIRKRVHFCFLSAEDADALIGPEQQQQRESAGDDHRPQSRPDSSASASQKRHGGLLQEIRVESEIGRKEDGKQVLKNVGKVERFVLAQVRRIFEEELVYPSFWTFLI</sequence>
<reference key="1">
    <citation type="journal article" date="2005" name="Nature">
        <title>Genomic sequence of the pathogenic and allergenic filamentous fungus Aspergillus fumigatus.</title>
        <authorList>
            <person name="Nierman W.C."/>
            <person name="Pain A."/>
            <person name="Anderson M.J."/>
            <person name="Wortman J.R."/>
            <person name="Kim H.S."/>
            <person name="Arroyo J."/>
            <person name="Berriman M."/>
            <person name="Abe K."/>
            <person name="Archer D.B."/>
            <person name="Bermejo C."/>
            <person name="Bennett J.W."/>
            <person name="Bowyer P."/>
            <person name="Chen D."/>
            <person name="Collins M."/>
            <person name="Coulsen R."/>
            <person name="Davies R."/>
            <person name="Dyer P.S."/>
            <person name="Farman M.L."/>
            <person name="Fedorova N."/>
            <person name="Fedorova N.D."/>
            <person name="Feldblyum T.V."/>
            <person name="Fischer R."/>
            <person name="Fosker N."/>
            <person name="Fraser A."/>
            <person name="Garcia J.L."/>
            <person name="Garcia M.J."/>
            <person name="Goble A."/>
            <person name="Goldman G.H."/>
            <person name="Gomi K."/>
            <person name="Griffith-Jones S."/>
            <person name="Gwilliam R."/>
            <person name="Haas B.J."/>
            <person name="Haas H."/>
            <person name="Harris D.E."/>
            <person name="Horiuchi H."/>
            <person name="Huang J."/>
            <person name="Humphray S."/>
            <person name="Jimenez J."/>
            <person name="Keller N."/>
            <person name="Khouri H."/>
            <person name="Kitamoto K."/>
            <person name="Kobayashi T."/>
            <person name="Konzack S."/>
            <person name="Kulkarni R."/>
            <person name="Kumagai T."/>
            <person name="Lafton A."/>
            <person name="Latge J.-P."/>
            <person name="Li W."/>
            <person name="Lord A."/>
            <person name="Lu C."/>
            <person name="Majoros W.H."/>
            <person name="May G.S."/>
            <person name="Miller B.L."/>
            <person name="Mohamoud Y."/>
            <person name="Molina M."/>
            <person name="Monod M."/>
            <person name="Mouyna I."/>
            <person name="Mulligan S."/>
            <person name="Murphy L.D."/>
            <person name="O'Neil S."/>
            <person name="Paulsen I."/>
            <person name="Penalva M.A."/>
            <person name="Pertea M."/>
            <person name="Price C."/>
            <person name="Pritchard B.L."/>
            <person name="Quail M.A."/>
            <person name="Rabbinowitsch E."/>
            <person name="Rawlins N."/>
            <person name="Rajandream M.A."/>
            <person name="Reichard U."/>
            <person name="Renauld H."/>
            <person name="Robson G.D."/>
            <person name="Rodriguez de Cordoba S."/>
            <person name="Rodriguez-Pena J.M."/>
            <person name="Ronning C.M."/>
            <person name="Rutter S."/>
            <person name="Salzberg S.L."/>
            <person name="Sanchez M."/>
            <person name="Sanchez-Ferrero J.C."/>
            <person name="Saunders D."/>
            <person name="Seeger K."/>
            <person name="Squares R."/>
            <person name="Squares S."/>
            <person name="Takeuchi M."/>
            <person name="Tekaia F."/>
            <person name="Turner G."/>
            <person name="Vazquez de Aldana C.R."/>
            <person name="Weidman J."/>
            <person name="White O."/>
            <person name="Woodward J.R."/>
            <person name="Yu J.-H."/>
            <person name="Fraser C.M."/>
            <person name="Galagan J.E."/>
            <person name="Asai K."/>
            <person name="Machida M."/>
            <person name="Hall N."/>
            <person name="Barrell B.G."/>
            <person name="Denning D.W."/>
        </authorList>
    </citation>
    <scope>NUCLEOTIDE SEQUENCE [LARGE SCALE GENOMIC DNA]</scope>
    <source>
        <strain>ATCC MYA-4609 / CBS 101355 / FGSC A1100 / Af293</strain>
    </source>
</reference>
<organism>
    <name type="scientific">Aspergillus fumigatus (strain ATCC MYA-4609 / CBS 101355 / FGSC A1100 / Af293)</name>
    <name type="common">Neosartorya fumigata</name>
    <dbReference type="NCBI Taxonomy" id="330879"/>
    <lineage>
        <taxon>Eukaryota</taxon>
        <taxon>Fungi</taxon>
        <taxon>Dikarya</taxon>
        <taxon>Ascomycota</taxon>
        <taxon>Pezizomycotina</taxon>
        <taxon>Eurotiomycetes</taxon>
        <taxon>Eurotiomycetidae</taxon>
        <taxon>Eurotiales</taxon>
        <taxon>Aspergillaceae</taxon>
        <taxon>Aspergillus</taxon>
        <taxon>Aspergillus subgen. Fumigati</taxon>
    </lineage>
</organism>
<evidence type="ECO:0000255" key="1">
    <source>
        <dbReference type="HAMAP-Rule" id="MF_03104"/>
    </source>
</evidence>
<evidence type="ECO:0000256" key="2">
    <source>
        <dbReference type="SAM" id="MobiDB-lite"/>
    </source>
</evidence>
<feature type="chain" id="PRO_0000384270" description="Mitochondrial distribution and morphology protein 12">
    <location>
        <begin position="1"/>
        <end position="439"/>
    </location>
</feature>
<feature type="domain" description="SMP-LTD" evidence="1">
    <location>
        <begin position="1"/>
        <end position="439"/>
    </location>
</feature>
<feature type="region of interest" description="Disordered" evidence="2">
    <location>
        <begin position="70"/>
        <end position="103"/>
    </location>
</feature>
<feature type="region of interest" description="Disordered" evidence="2">
    <location>
        <begin position="185"/>
        <end position="274"/>
    </location>
</feature>
<feature type="region of interest" description="Disordered" evidence="2">
    <location>
        <begin position="354"/>
        <end position="386"/>
    </location>
</feature>
<feature type="compositionally biased region" description="Basic and acidic residues" evidence="2">
    <location>
        <begin position="78"/>
        <end position="91"/>
    </location>
</feature>
<feature type="compositionally biased region" description="Polar residues" evidence="2">
    <location>
        <begin position="215"/>
        <end position="245"/>
    </location>
</feature>
<feature type="compositionally biased region" description="Basic and acidic residues" evidence="2">
    <location>
        <begin position="247"/>
        <end position="261"/>
    </location>
</feature>
<feature type="compositionally biased region" description="Basic and acidic residues" evidence="2">
    <location>
        <begin position="362"/>
        <end position="371"/>
    </location>
</feature>
<gene>
    <name evidence="1" type="primary">mdm12</name>
    <name type="ORF">AFUA_1G14790</name>
</gene>
<accession>Q4WRX2</accession>
<name>MDM12_ASPFU</name>
<keyword id="KW-0256">Endoplasmic reticulum</keyword>
<keyword id="KW-0445">Lipid transport</keyword>
<keyword id="KW-0446">Lipid-binding</keyword>
<keyword id="KW-0472">Membrane</keyword>
<keyword id="KW-0496">Mitochondrion</keyword>
<keyword id="KW-1000">Mitochondrion outer membrane</keyword>
<keyword id="KW-1185">Reference proteome</keyword>
<keyword id="KW-0813">Transport</keyword>
<comment type="function">
    <text evidence="1">Component of the ERMES/MDM complex, which serves as a molecular tether to connect the endoplasmic reticulum (ER) and mitochondria. Components of this complex are involved in the control of mitochondrial shape and protein biogenesis, and function in nonvesicular lipid trafficking between the ER and mitochondria. Mdm12 is required for the interaction of the ER-resident membrane protein mmm1 and the outer mitochondrial membrane-resident beta-barrel protein mdm10. The mdm12-mmm1 subcomplex functions in the major beta-barrel assembly pathway that is responsible for biogenesis of all mitochondrial outer membrane beta-barrel proteins, and acts in a late step after the SAM complex. The mdm10-mdm12-mmm1 subcomplex further acts in the TOM40-specific pathway after the action of the mdm12-mmm1 complex. Essential for establishing and maintaining the structure of mitochondria and maintenance of mtDNA nucleoids.</text>
</comment>
<comment type="subunit">
    <text evidence="1">Component of the ER-mitochondria encounter structure (ERMES) or MDM complex, composed of mmm1, mdm10, mdm12 and mdm34. A mmm1 homodimer associates with one molecule of mdm12 on each side in a pairwise head-to-tail manner, and the SMP-LTD domains of mmm1 and mdm12 generate a continuous hydrophobic tunnel for phospholipid trafficking.</text>
</comment>
<comment type="subcellular location">
    <subcellularLocation>
        <location evidence="1">Mitochondrion outer membrane</location>
        <topology evidence="1">Peripheral membrane protein</topology>
        <orientation evidence="1">Cytoplasmic side</orientation>
    </subcellularLocation>
    <subcellularLocation>
        <location evidence="1">Endoplasmic reticulum membrane</location>
        <topology evidence="1">Peripheral membrane protein</topology>
        <orientation evidence="1">Cytoplasmic side</orientation>
    </subcellularLocation>
    <text evidence="1">The ERMES/MDM complex localizes to a few discrete foci (around 10 per single cell), that represent mitochondria-endoplasmic reticulum junctions. These foci are often found next to mtDNA nucleoids.</text>
</comment>
<comment type="domain">
    <text evidence="1">The SMP-LTD domain is a barrel-like domain that can bind various types of glycerophospholipids in its interior and mediate their transfer between two adjacent bilayers.</text>
</comment>
<comment type="similarity">
    <text evidence="1">Belongs to the MDM12 family.</text>
</comment>